<protein>
    <recommendedName>
        <fullName evidence="1">UPF0340 protein SPP_0683</fullName>
    </recommendedName>
</protein>
<sequence>MNETQIQRETRQVVEDVLEKTNLKQGVLFVLGLSSSEVLGGQIGKESSQEIGELIVETILGILGSRGIHLAVQGCEHVNRALVVERQVAEQFDLEIVSVHPTLHAGGSGQLAAFKFMQDPVEVEFIKAHAGLDIGDTAIGMHVKHVQVPIRPILREIGHAHVTALASRPKLIGGARAHYPQDAIRKS</sequence>
<feature type="chain" id="PRO_1000148530" description="UPF0340 protein SPP_0683">
    <location>
        <begin position="1"/>
        <end position="187"/>
    </location>
</feature>
<comment type="similarity">
    <text evidence="1">Belongs to the UPF0340 family.</text>
</comment>
<proteinExistence type="inferred from homology"/>
<accession>C1CJD0</accession>
<evidence type="ECO:0000255" key="1">
    <source>
        <dbReference type="HAMAP-Rule" id="MF_00800"/>
    </source>
</evidence>
<reference key="1">
    <citation type="journal article" date="2010" name="Genome Biol.">
        <title>Structure and dynamics of the pan-genome of Streptococcus pneumoniae and closely related species.</title>
        <authorList>
            <person name="Donati C."/>
            <person name="Hiller N.L."/>
            <person name="Tettelin H."/>
            <person name="Muzzi A."/>
            <person name="Croucher N.J."/>
            <person name="Angiuoli S.V."/>
            <person name="Oggioni M."/>
            <person name="Dunning Hotopp J.C."/>
            <person name="Hu F.Z."/>
            <person name="Riley D.R."/>
            <person name="Covacci A."/>
            <person name="Mitchell T.J."/>
            <person name="Bentley S.D."/>
            <person name="Kilian M."/>
            <person name="Ehrlich G.D."/>
            <person name="Rappuoli R."/>
            <person name="Moxon E.R."/>
            <person name="Masignani V."/>
        </authorList>
    </citation>
    <scope>NUCLEOTIDE SEQUENCE [LARGE SCALE GENOMIC DNA]</scope>
    <source>
        <strain>P1031</strain>
    </source>
</reference>
<gene>
    <name type="ordered locus">SPP_0683</name>
</gene>
<name>Y683_STRZP</name>
<organism>
    <name type="scientific">Streptococcus pneumoniae (strain P1031)</name>
    <dbReference type="NCBI Taxonomy" id="488223"/>
    <lineage>
        <taxon>Bacteria</taxon>
        <taxon>Bacillati</taxon>
        <taxon>Bacillota</taxon>
        <taxon>Bacilli</taxon>
        <taxon>Lactobacillales</taxon>
        <taxon>Streptococcaceae</taxon>
        <taxon>Streptococcus</taxon>
    </lineage>
</organism>
<dbReference type="EMBL" id="CP000920">
    <property type="protein sequence ID" value="ACO21812.1"/>
    <property type="molecule type" value="Genomic_DNA"/>
</dbReference>
<dbReference type="RefSeq" id="WP_001006377.1">
    <property type="nucleotide sequence ID" value="NC_012467.1"/>
</dbReference>
<dbReference type="SMR" id="C1CJD0"/>
<dbReference type="KEGG" id="spp:SPP_0683"/>
<dbReference type="HOGENOM" id="CLU_106658_0_0_9"/>
<dbReference type="Gene3D" id="3.40.50.10360">
    <property type="entry name" value="Hypothetical protein TT1679"/>
    <property type="match status" value="1"/>
</dbReference>
<dbReference type="HAMAP" id="MF_00800">
    <property type="entry name" value="UPF0340"/>
    <property type="match status" value="1"/>
</dbReference>
<dbReference type="InterPro" id="IPR028345">
    <property type="entry name" value="Antibiotic_NAT-like"/>
</dbReference>
<dbReference type="InterPro" id="IPR006340">
    <property type="entry name" value="DUF436"/>
</dbReference>
<dbReference type="NCBIfam" id="TIGR01440">
    <property type="entry name" value="TIGR01440 family protein"/>
    <property type="match status" value="1"/>
</dbReference>
<dbReference type="Pfam" id="PF04260">
    <property type="entry name" value="DUF436"/>
    <property type="match status" value="1"/>
</dbReference>
<dbReference type="PIRSF" id="PIRSF007510">
    <property type="entry name" value="UCP007510"/>
    <property type="match status" value="1"/>
</dbReference>
<dbReference type="SUPFAM" id="SSF110710">
    <property type="entry name" value="TTHA0583/YokD-like"/>
    <property type="match status" value="1"/>
</dbReference>